<dbReference type="EMBL" id="BX572605">
    <property type="protein sequence ID" value="CAE29355.1"/>
    <property type="molecule type" value="Genomic_DNA"/>
</dbReference>
<dbReference type="RefSeq" id="WP_011159450.1">
    <property type="nucleotide sequence ID" value="NZ_CP116810.1"/>
</dbReference>
<dbReference type="STRING" id="258594.RPA3914"/>
<dbReference type="GeneID" id="66895030"/>
<dbReference type="eggNOG" id="COG5443">
    <property type="taxonomic scope" value="Bacteria"/>
</dbReference>
<dbReference type="HOGENOM" id="CLU_130913_0_0_5"/>
<dbReference type="PhylomeDB" id="P61548"/>
<dbReference type="GO" id="GO:0048027">
    <property type="term" value="F:mRNA 5'-UTR binding"/>
    <property type="evidence" value="ECO:0007669"/>
    <property type="project" value="UniProtKB-UniRule"/>
</dbReference>
<dbReference type="GO" id="GO:0044781">
    <property type="term" value="P:bacterial-type flagellum organization"/>
    <property type="evidence" value="ECO:0007669"/>
    <property type="project" value="UniProtKB-KW"/>
</dbReference>
<dbReference type="GO" id="GO:0006402">
    <property type="term" value="P:mRNA catabolic process"/>
    <property type="evidence" value="ECO:0007669"/>
    <property type="project" value="InterPro"/>
</dbReference>
<dbReference type="GO" id="GO:1902209">
    <property type="term" value="P:negative regulation of bacterial-type flagellum assembly"/>
    <property type="evidence" value="ECO:0007669"/>
    <property type="project" value="UniProtKB-UniRule"/>
</dbReference>
<dbReference type="HAMAP" id="MF_00783">
    <property type="entry name" value="FlbT"/>
    <property type="match status" value="1"/>
</dbReference>
<dbReference type="InterPro" id="IPR009967">
    <property type="entry name" value="Flagellum_FlbT"/>
</dbReference>
<dbReference type="NCBIfam" id="NF009432">
    <property type="entry name" value="PRK12791.1"/>
    <property type="match status" value="1"/>
</dbReference>
<dbReference type="Pfam" id="PF07378">
    <property type="entry name" value="FlbT"/>
    <property type="match status" value="1"/>
</dbReference>
<name>FLBT_RHOPA</name>
<protein>
    <recommendedName>
        <fullName evidence="1">Probable flagellum biosynthesis repressor protein FlbT</fullName>
    </recommendedName>
</protein>
<accession>P61548</accession>
<organism>
    <name type="scientific">Rhodopseudomonas palustris (strain ATCC BAA-98 / CGA009)</name>
    <dbReference type="NCBI Taxonomy" id="258594"/>
    <lineage>
        <taxon>Bacteria</taxon>
        <taxon>Pseudomonadati</taxon>
        <taxon>Pseudomonadota</taxon>
        <taxon>Alphaproteobacteria</taxon>
        <taxon>Hyphomicrobiales</taxon>
        <taxon>Nitrobacteraceae</taxon>
        <taxon>Rhodopseudomonas</taxon>
    </lineage>
</organism>
<sequence length="126" mass="14538">MPLRVELKPFERIVIGQSVITNSDTRTTFLIDGDAPILREKDILTAETANTPVKRIYLCVQMMYLQNDIPAYQDLYLGFIKELIEAVPSFRETIEATSNHILSGNLYKALRELRPLIKREEELLSR</sequence>
<keyword id="KW-1005">Bacterial flagellum biogenesis</keyword>
<keyword id="KW-0678">Repressor</keyword>
<keyword id="KW-0694">RNA-binding</keyword>
<evidence type="ECO:0000255" key="1">
    <source>
        <dbReference type="HAMAP-Rule" id="MF_00783"/>
    </source>
</evidence>
<comment type="function">
    <text evidence="1">Has a post-transcriptional repressor function in flagellum biogenesis. Associates with the 5'-UTR of fljK mRNA and promotes its degradation.</text>
</comment>
<comment type="similarity">
    <text evidence="1">Belongs to the FlbT family.</text>
</comment>
<proteinExistence type="inferred from homology"/>
<reference key="1">
    <citation type="journal article" date="2004" name="Nat. Biotechnol.">
        <title>Complete genome sequence of the metabolically versatile photosynthetic bacterium Rhodopseudomonas palustris.</title>
        <authorList>
            <person name="Larimer F.W."/>
            <person name="Chain P."/>
            <person name="Hauser L."/>
            <person name="Lamerdin J.E."/>
            <person name="Malfatti S."/>
            <person name="Do L."/>
            <person name="Land M.L."/>
            <person name="Pelletier D.A."/>
            <person name="Beatty J.T."/>
            <person name="Lang A.S."/>
            <person name="Tabita F.R."/>
            <person name="Gibson J.L."/>
            <person name="Hanson T.E."/>
            <person name="Bobst C."/>
            <person name="Torres y Torres J.L."/>
            <person name="Peres C."/>
            <person name="Harrison F.H."/>
            <person name="Gibson J."/>
            <person name="Harwood C.S."/>
        </authorList>
    </citation>
    <scope>NUCLEOTIDE SEQUENCE [LARGE SCALE GENOMIC DNA]</scope>
    <source>
        <strain>ATCC BAA-98 / CGA009</strain>
    </source>
</reference>
<feature type="chain" id="PRO_0000217158" description="Probable flagellum biosynthesis repressor protein FlbT">
    <location>
        <begin position="1"/>
        <end position="126"/>
    </location>
</feature>
<gene>
    <name evidence="1" type="primary">flbT</name>
    <name type="ordered locus">RPA3914</name>
</gene>